<keyword id="KW-0030">Aminoacyl-tRNA synthetase</keyword>
<keyword id="KW-0067">ATP-binding</keyword>
<keyword id="KW-0963">Cytoplasm</keyword>
<keyword id="KW-0436">Ligase</keyword>
<keyword id="KW-0547">Nucleotide-binding</keyword>
<keyword id="KW-0648">Protein biosynthesis</keyword>
<accession>A1RS32</accession>
<gene>
    <name evidence="1" type="primary">argS</name>
    <name type="ordered locus">Pisl_0586</name>
</gene>
<organism>
    <name type="scientific">Pyrobaculum islandicum (strain DSM 4184 / JCM 9189 / GEO3)</name>
    <dbReference type="NCBI Taxonomy" id="384616"/>
    <lineage>
        <taxon>Archaea</taxon>
        <taxon>Thermoproteota</taxon>
        <taxon>Thermoprotei</taxon>
        <taxon>Thermoproteales</taxon>
        <taxon>Thermoproteaceae</taxon>
        <taxon>Pyrobaculum</taxon>
    </lineage>
</organism>
<comment type="catalytic activity">
    <reaction evidence="1">
        <text>tRNA(Arg) + L-arginine + ATP = L-arginyl-tRNA(Arg) + AMP + diphosphate</text>
        <dbReference type="Rhea" id="RHEA:20301"/>
        <dbReference type="Rhea" id="RHEA-COMP:9658"/>
        <dbReference type="Rhea" id="RHEA-COMP:9673"/>
        <dbReference type="ChEBI" id="CHEBI:30616"/>
        <dbReference type="ChEBI" id="CHEBI:32682"/>
        <dbReference type="ChEBI" id="CHEBI:33019"/>
        <dbReference type="ChEBI" id="CHEBI:78442"/>
        <dbReference type="ChEBI" id="CHEBI:78513"/>
        <dbReference type="ChEBI" id="CHEBI:456215"/>
        <dbReference type="EC" id="6.1.1.19"/>
    </reaction>
</comment>
<comment type="subcellular location">
    <subcellularLocation>
        <location evidence="1">Cytoplasm</location>
    </subcellularLocation>
</comment>
<comment type="similarity">
    <text evidence="1">Belongs to the class-I aminoacyl-tRNA synthetase family.</text>
</comment>
<sequence length="632" mass="72117">MDPLKPPREEFEKFVAEVAYAIGIGEVPEIERSKRFGYFSAKFHKYRVDAGKLKETVDSLKSRQFKYLTSISVDGLYLNVDLAVEKVAELTFRAVAEMGDKYGFTDECKIGSFLVEHTSANPIHPLHIGHGRNAILGDSLVRLLRFCGNVVQSHFYVDDCGVQVMYAAIGYNVVKKYVDEVLKRTKPDVVIGAIYSAVNAIAEINRLKKELEKEKDDEKRREIINEIDSWVSVLKRLIDTEGEVINKLVEVLGQRNIVEEAAELNKRYETGDPEVKKIVREVVELVLKGQRETLARLGIELDSWDYESDIAVWSGEATRVVSELRRRWPQYIDDRGGAVVFRADKFVEDFKLWDVLDLPKFIPPVTLTRSDGTTLYVTRDVAYALWQARRGFDKVIRVISTEQTHEQAHVRIILYALGYEDVAKKLIHYAYEMVNLPGMKMSARRGQYISLDEILDEAVERSADLVKEKNPEIAGIIAERVGVGSVRYAFLSTSPRKPIEFKWETVLNMRQNSGPFLQYTYVRAYSILEKAQEIDLKKVAIPKEILPEERELILKVAEWPSVVREATRALRPDYVAEFLDGLALIFNSYYEKAPVLKTEEPVRSFRLALVNSVKTVLAAGFYILGIPTLTKM</sequence>
<proteinExistence type="inferred from homology"/>
<reference key="1">
    <citation type="submission" date="2006-12" db="EMBL/GenBank/DDBJ databases">
        <title>Complete sequence of Pyrobaculum islandicum DSM 4184.</title>
        <authorList>
            <person name="Copeland A."/>
            <person name="Lucas S."/>
            <person name="Lapidus A."/>
            <person name="Barry K."/>
            <person name="Detter J.C."/>
            <person name="Glavina del Rio T."/>
            <person name="Dalin E."/>
            <person name="Tice H."/>
            <person name="Pitluck S."/>
            <person name="Meincke L."/>
            <person name="Brettin T."/>
            <person name="Bruce D."/>
            <person name="Han C."/>
            <person name="Tapia R."/>
            <person name="Gilna P."/>
            <person name="Schmutz J."/>
            <person name="Larimer F."/>
            <person name="Land M."/>
            <person name="Hauser L."/>
            <person name="Kyrpides N."/>
            <person name="Mikhailova N."/>
            <person name="Cozen A.E."/>
            <person name="Fitz-Gibbon S.T."/>
            <person name="House C.H."/>
            <person name="Saltikov C."/>
            <person name="Lowe T."/>
            <person name="Richardson P."/>
        </authorList>
    </citation>
    <scope>NUCLEOTIDE SEQUENCE [LARGE SCALE GENOMIC DNA]</scope>
    <source>
        <strain>DSM 4184 / JCM 9189 / GEO3</strain>
    </source>
</reference>
<dbReference type="EC" id="6.1.1.19" evidence="1"/>
<dbReference type="EMBL" id="CP000504">
    <property type="protein sequence ID" value="ABL87764.1"/>
    <property type="molecule type" value="Genomic_DNA"/>
</dbReference>
<dbReference type="RefSeq" id="WP_011762340.1">
    <property type="nucleotide sequence ID" value="NC_008701.1"/>
</dbReference>
<dbReference type="SMR" id="A1RS32"/>
<dbReference type="STRING" id="384616.Pisl_0586"/>
<dbReference type="GeneID" id="4616557"/>
<dbReference type="KEGG" id="pis:Pisl_0586"/>
<dbReference type="eggNOG" id="arCOG00487">
    <property type="taxonomic scope" value="Archaea"/>
</dbReference>
<dbReference type="HOGENOM" id="CLU_006406_6_1_2"/>
<dbReference type="OrthoDB" id="372102at2157"/>
<dbReference type="Proteomes" id="UP000002595">
    <property type="component" value="Chromosome"/>
</dbReference>
<dbReference type="GO" id="GO:0005737">
    <property type="term" value="C:cytoplasm"/>
    <property type="evidence" value="ECO:0007669"/>
    <property type="project" value="UniProtKB-SubCell"/>
</dbReference>
<dbReference type="GO" id="GO:0004814">
    <property type="term" value="F:arginine-tRNA ligase activity"/>
    <property type="evidence" value="ECO:0007669"/>
    <property type="project" value="UniProtKB-UniRule"/>
</dbReference>
<dbReference type="GO" id="GO:0005524">
    <property type="term" value="F:ATP binding"/>
    <property type="evidence" value="ECO:0007669"/>
    <property type="project" value="UniProtKB-UniRule"/>
</dbReference>
<dbReference type="GO" id="GO:0006420">
    <property type="term" value="P:arginyl-tRNA aminoacylation"/>
    <property type="evidence" value="ECO:0007669"/>
    <property type="project" value="UniProtKB-UniRule"/>
</dbReference>
<dbReference type="FunFam" id="3.40.50.620:FF:000659">
    <property type="entry name" value="DALR anticodon binding domain containing protein"/>
    <property type="match status" value="1"/>
</dbReference>
<dbReference type="Gene3D" id="3.40.50.620">
    <property type="entry name" value="HUPs"/>
    <property type="match status" value="2"/>
</dbReference>
<dbReference type="Gene3D" id="1.10.730.10">
    <property type="entry name" value="Isoleucyl-tRNA Synthetase, Domain 1"/>
    <property type="match status" value="1"/>
</dbReference>
<dbReference type="HAMAP" id="MF_00123">
    <property type="entry name" value="Arg_tRNA_synth"/>
    <property type="match status" value="1"/>
</dbReference>
<dbReference type="InterPro" id="IPR001278">
    <property type="entry name" value="Arg-tRNA-ligase"/>
</dbReference>
<dbReference type="InterPro" id="IPR035684">
    <property type="entry name" value="ArgRS_core"/>
</dbReference>
<dbReference type="InterPro" id="IPR008909">
    <property type="entry name" value="DALR_anticod-bd"/>
</dbReference>
<dbReference type="InterPro" id="IPR014729">
    <property type="entry name" value="Rossmann-like_a/b/a_fold"/>
</dbReference>
<dbReference type="InterPro" id="IPR009080">
    <property type="entry name" value="tRNAsynth_Ia_anticodon-bd"/>
</dbReference>
<dbReference type="NCBIfam" id="TIGR00456">
    <property type="entry name" value="argS"/>
    <property type="match status" value="1"/>
</dbReference>
<dbReference type="NCBIfam" id="NF002446">
    <property type="entry name" value="PRK01611.3-3"/>
    <property type="match status" value="1"/>
</dbReference>
<dbReference type="PANTHER" id="PTHR11956:SF5">
    <property type="entry name" value="ARGININE--TRNA LIGASE, CYTOPLASMIC"/>
    <property type="match status" value="1"/>
</dbReference>
<dbReference type="PANTHER" id="PTHR11956">
    <property type="entry name" value="ARGINYL-TRNA SYNTHETASE"/>
    <property type="match status" value="1"/>
</dbReference>
<dbReference type="Pfam" id="PF05746">
    <property type="entry name" value="DALR_1"/>
    <property type="match status" value="1"/>
</dbReference>
<dbReference type="Pfam" id="PF00750">
    <property type="entry name" value="tRNA-synt_1d"/>
    <property type="match status" value="1"/>
</dbReference>
<dbReference type="PRINTS" id="PR01038">
    <property type="entry name" value="TRNASYNTHARG"/>
</dbReference>
<dbReference type="SMART" id="SM00836">
    <property type="entry name" value="DALR_1"/>
    <property type="match status" value="1"/>
</dbReference>
<dbReference type="SUPFAM" id="SSF47323">
    <property type="entry name" value="Anticodon-binding domain of a subclass of class I aminoacyl-tRNA synthetases"/>
    <property type="match status" value="1"/>
</dbReference>
<dbReference type="SUPFAM" id="SSF52374">
    <property type="entry name" value="Nucleotidylyl transferase"/>
    <property type="match status" value="1"/>
</dbReference>
<name>SYR_PYRIL</name>
<feature type="chain" id="PRO_1000018098" description="Arginine--tRNA ligase">
    <location>
        <begin position="1"/>
        <end position="632"/>
    </location>
</feature>
<feature type="short sequence motif" description="'HIGH' region">
    <location>
        <begin position="120"/>
        <end position="130"/>
    </location>
</feature>
<protein>
    <recommendedName>
        <fullName evidence="1">Arginine--tRNA ligase</fullName>
        <ecNumber evidence="1">6.1.1.19</ecNumber>
    </recommendedName>
    <alternativeName>
        <fullName evidence="1">Arginyl-tRNA synthetase</fullName>
        <shortName evidence="1">ArgRS</shortName>
    </alternativeName>
</protein>
<evidence type="ECO:0000255" key="1">
    <source>
        <dbReference type="HAMAP-Rule" id="MF_00123"/>
    </source>
</evidence>